<name>OCEL1_HUMAN</name>
<sequence>MHNPDGSASPTADPGSELQTLGQAARRPPPPRAGHDAPRRTRPSARKPLSCFSRRPMPTREPPKTRGSRGHLHTHPPGPGPPLQGLAPRGLKTSAPRPPCQPQPGPHKAKTKKIVFEDELLSQALLGAKKPIGAIPKGHKPRPHPVPDYELKYPPVSSERERSRYVAVFQDQYGEFLELQHEVGCAQAKLRQLEALLSSLPPPQSQKEAQVAARVWREFEMKRMDPGFLDKQARCHYLKGKLRHLKTQIQKFDDQGDSEGSVYF</sequence>
<organism>
    <name type="scientific">Homo sapiens</name>
    <name type="common">Human</name>
    <dbReference type="NCBI Taxonomy" id="9606"/>
    <lineage>
        <taxon>Eukaryota</taxon>
        <taxon>Metazoa</taxon>
        <taxon>Chordata</taxon>
        <taxon>Craniata</taxon>
        <taxon>Vertebrata</taxon>
        <taxon>Euteleostomi</taxon>
        <taxon>Mammalia</taxon>
        <taxon>Eutheria</taxon>
        <taxon>Euarchontoglires</taxon>
        <taxon>Primates</taxon>
        <taxon>Haplorrhini</taxon>
        <taxon>Catarrhini</taxon>
        <taxon>Hominidae</taxon>
        <taxon>Homo</taxon>
    </lineage>
</organism>
<feature type="chain" id="PRO_0000271531" description="Occludin/ELL domain-containing protein 1">
    <location>
        <begin position="1"/>
        <end position="264"/>
    </location>
</feature>
<feature type="domain" description="OCEL" evidence="1">
    <location>
        <begin position="147"/>
        <end position="257"/>
    </location>
</feature>
<feature type="region of interest" description="Disordered" evidence="2">
    <location>
        <begin position="1"/>
        <end position="112"/>
    </location>
</feature>
<feature type="compositionally biased region" description="Polar residues" evidence="2">
    <location>
        <begin position="1"/>
        <end position="10"/>
    </location>
</feature>
<feature type="compositionally biased region" description="Pro residues" evidence="2">
    <location>
        <begin position="96"/>
        <end position="105"/>
    </location>
</feature>
<feature type="sequence variant" id="VAR_034356" description="In dbSNP:rs10425488.">
    <original>R</original>
    <variation>L</variation>
    <location>
        <position position="42"/>
    </location>
</feature>
<feature type="sequence variant" id="VAR_034357" description="In dbSNP:rs891203.">
    <original>A</original>
    <variation>G</variation>
    <location>
        <position position="109"/>
    </location>
</feature>
<gene>
    <name type="primary">OCEL1</name>
</gene>
<comment type="similarity">
    <text evidence="3">Belongs to the ELL/occludin family.</text>
</comment>
<evidence type="ECO:0000255" key="1">
    <source>
        <dbReference type="PROSITE-ProRule" id="PRU01324"/>
    </source>
</evidence>
<evidence type="ECO:0000256" key="2">
    <source>
        <dbReference type="SAM" id="MobiDB-lite"/>
    </source>
</evidence>
<evidence type="ECO:0000305" key="3"/>
<reference key="1">
    <citation type="journal article" date="2004" name="Nat. Genet.">
        <title>Complete sequencing and characterization of 21,243 full-length human cDNAs.</title>
        <authorList>
            <person name="Ota T."/>
            <person name="Suzuki Y."/>
            <person name="Nishikawa T."/>
            <person name="Otsuki T."/>
            <person name="Sugiyama T."/>
            <person name="Irie R."/>
            <person name="Wakamatsu A."/>
            <person name="Hayashi K."/>
            <person name="Sato H."/>
            <person name="Nagai K."/>
            <person name="Kimura K."/>
            <person name="Makita H."/>
            <person name="Sekine M."/>
            <person name="Obayashi M."/>
            <person name="Nishi T."/>
            <person name="Shibahara T."/>
            <person name="Tanaka T."/>
            <person name="Ishii S."/>
            <person name="Yamamoto J."/>
            <person name="Saito K."/>
            <person name="Kawai Y."/>
            <person name="Isono Y."/>
            <person name="Nakamura Y."/>
            <person name="Nagahari K."/>
            <person name="Murakami K."/>
            <person name="Yasuda T."/>
            <person name="Iwayanagi T."/>
            <person name="Wagatsuma M."/>
            <person name="Shiratori A."/>
            <person name="Sudo H."/>
            <person name="Hosoiri T."/>
            <person name="Kaku Y."/>
            <person name="Kodaira H."/>
            <person name="Kondo H."/>
            <person name="Sugawara M."/>
            <person name="Takahashi M."/>
            <person name="Kanda K."/>
            <person name="Yokoi T."/>
            <person name="Furuya T."/>
            <person name="Kikkawa E."/>
            <person name="Omura Y."/>
            <person name="Abe K."/>
            <person name="Kamihara K."/>
            <person name="Katsuta N."/>
            <person name="Sato K."/>
            <person name="Tanikawa M."/>
            <person name="Yamazaki M."/>
            <person name="Ninomiya K."/>
            <person name="Ishibashi T."/>
            <person name="Yamashita H."/>
            <person name="Murakawa K."/>
            <person name="Fujimori K."/>
            <person name="Tanai H."/>
            <person name="Kimata M."/>
            <person name="Watanabe M."/>
            <person name="Hiraoka S."/>
            <person name="Chiba Y."/>
            <person name="Ishida S."/>
            <person name="Ono Y."/>
            <person name="Takiguchi S."/>
            <person name="Watanabe S."/>
            <person name="Yosida M."/>
            <person name="Hotuta T."/>
            <person name="Kusano J."/>
            <person name="Kanehori K."/>
            <person name="Takahashi-Fujii A."/>
            <person name="Hara H."/>
            <person name="Tanase T.-O."/>
            <person name="Nomura Y."/>
            <person name="Togiya S."/>
            <person name="Komai F."/>
            <person name="Hara R."/>
            <person name="Takeuchi K."/>
            <person name="Arita M."/>
            <person name="Imose N."/>
            <person name="Musashino K."/>
            <person name="Yuuki H."/>
            <person name="Oshima A."/>
            <person name="Sasaki N."/>
            <person name="Aotsuka S."/>
            <person name="Yoshikawa Y."/>
            <person name="Matsunawa H."/>
            <person name="Ichihara T."/>
            <person name="Shiohata N."/>
            <person name="Sano S."/>
            <person name="Moriya S."/>
            <person name="Momiyama H."/>
            <person name="Satoh N."/>
            <person name="Takami S."/>
            <person name="Terashima Y."/>
            <person name="Suzuki O."/>
            <person name="Nakagawa S."/>
            <person name="Senoh A."/>
            <person name="Mizoguchi H."/>
            <person name="Goto Y."/>
            <person name="Shimizu F."/>
            <person name="Wakebe H."/>
            <person name="Hishigaki H."/>
            <person name="Watanabe T."/>
            <person name="Sugiyama A."/>
            <person name="Takemoto M."/>
            <person name="Kawakami B."/>
            <person name="Yamazaki M."/>
            <person name="Watanabe K."/>
            <person name="Kumagai A."/>
            <person name="Itakura S."/>
            <person name="Fukuzumi Y."/>
            <person name="Fujimori Y."/>
            <person name="Komiyama M."/>
            <person name="Tashiro H."/>
            <person name="Tanigami A."/>
            <person name="Fujiwara T."/>
            <person name="Ono T."/>
            <person name="Yamada K."/>
            <person name="Fujii Y."/>
            <person name="Ozaki K."/>
            <person name="Hirao M."/>
            <person name="Ohmori Y."/>
            <person name="Kawabata A."/>
            <person name="Hikiji T."/>
            <person name="Kobatake N."/>
            <person name="Inagaki H."/>
            <person name="Ikema Y."/>
            <person name="Okamoto S."/>
            <person name="Okitani R."/>
            <person name="Kawakami T."/>
            <person name="Noguchi S."/>
            <person name="Itoh T."/>
            <person name="Shigeta K."/>
            <person name="Senba T."/>
            <person name="Matsumura K."/>
            <person name="Nakajima Y."/>
            <person name="Mizuno T."/>
            <person name="Morinaga M."/>
            <person name="Sasaki M."/>
            <person name="Togashi T."/>
            <person name="Oyama M."/>
            <person name="Hata H."/>
            <person name="Watanabe M."/>
            <person name="Komatsu T."/>
            <person name="Mizushima-Sugano J."/>
            <person name="Satoh T."/>
            <person name="Shirai Y."/>
            <person name="Takahashi Y."/>
            <person name="Nakagawa K."/>
            <person name="Okumura K."/>
            <person name="Nagase T."/>
            <person name="Nomura N."/>
            <person name="Kikuchi H."/>
            <person name="Masuho Y."/>
            <person name="Yamashita R."/>
            <person name="Nakai K."/>
            <person name="Yada T."/>
            <person name="Nakamura Y."/>
            <person name="Ohara O."/>
            <person name="Isogai T."/>
            <person name="Sugano S."/>
        </authorList>
    </citation>
    <scope>NUCLEOTIDE SEQUENCE [LARGE SCALE MRNA]</scope>
    <source>
        <tissue>Small intestine</tissue>
    </source>
</reference>
<reference key="2">
    <citation type="journal article" date="2004" name="Genome Res.">
        <title>The status, quality, and expansion of the NIH full-length cDNA project: the Mammalian Gene Collection (MGC).</title>
        <authorList>
            <consortium name="The MGC Project Team"/>
        </authorList>
    </citation>
    <scope>NUCLEOTIDE SEQUENCE [LARGE SCALE MRNA]</scope>
    <source>
        <tissue>Bone marrow</tissue>
    </source>
</reference>
<protein>
    <recommendedName>
        <fullName>Occludin/ELL domain-containing protein 1</fullName>
    </recommendedName>
</protein>
<keyword id="KW-1267">Proteomics identification</keyword>
<keyword id="KW-1185">Reference proteome</keyword>
<dbReference type="EMBL" id="AK026362">
    <property type="protein sequence ID" value="BAB15460.1"/>
    <property type="molecule type" value="mRNA"/>
</dbReference>
<dbReference type="EMBL" id="BC029361">
    <property type="protein sequence ID" value="AAH29361.1"/>
    <property type="molecule type" value="mRNA"/>
</dbReference>
<dbReference type="CCDS" id="CCDS12351.1"/>
<dbReference type="RefSeq" id="NP_078854.1">
    <property type="nucleotide sequence ID" value="NM_024578.3"/>
</dbReference>
<dbReference type="SMR" id="Q9H607"/>
<dbReference type="BioGRID" id="122759">
    <property type="interactions" value="4"/>
</dbReference>
<dbReference type="FunCoup" id="Q9H607">
    <property type="interactions" value="8"/>
</dbReference>
<dbReference type="IntAct" id="Q9H607">
    <property type="interactions" value="2"/>
</dbReference>
<dbReference type="STRING" id="9606.ENSP00000215061"/>
<dbReference type="iPTMnet" id="Q9H607"/>
<dbReference type="PhosphoSitePlus" id="Q9H607"/>
<dbReference type="BioMuta" id="OCEL1"/>
<dbReference type="DMDM" id="74733590"/>
<dbReference type="jPOST" id="Q9H607"/>
<dbReference type="MassIVE" id="Q9H607"/>
<dbReference type="PaxDb" id="9606-ENSP00000215061"/>
<dbReference type="PeptideAtlas" id="Q9H607"/>
<dbReference type="ProteomicsDB" id="80946"/>
<dbReference type="Antibodypedia" id="27553">
    <property type="antibodies" value="78 antibodies from 13 providers"/>
</dbReference>
<dbReference type="DNASU" id="79629"/>
<dbReference type="Ensembl" id="ENST00000215061.9">
    <property type="protein sequence ID" value="ENSP00000215061.3"/>
    <property type="gene ID" value="ENSG00000099330.9"/>
</dbReference>
<dbReference type="GeneID" id="79629"/>
<dbReference type="KEGG" id="hsa:79629"/>
<dbReference type="MANE-Select" id="ENST00000215061.9">
    <property type="protein sequence ID" value="ENSP00000215061.3"/>
    <property type="RefSeq nucleotide sequence ID" value="NM_024578.3"/>
    <property type="RefSeq protein sequence ID" value="NP_078854.1"/>
</dbReference>
<dbReference type="UCSC" id="uc002nfp.4">
    <property type="organism name" value="human"/>
</dbReference>
<dbReference type="AGR" id="HGNC:26221"/>
<dbReference type="CTD" id="79629"/>
<dbReference type="DisGeNET" id="79629"/>
<dbReference type="GeneCards" id="OCEL1"/>
<dbReference type="HGNC" id="HGNC:26221">
    <property type="gene designation" value="OCEL1"/>
</dbReference>
<dbReference type="HPA" id="ENSG00000099330">
    <property type="expression patterns" value="Tissue enhanced (liver)"/>
</dbReference>
<dbReference type="MalaCards" id="OCEL1"/>
<dbReference type="neXtProt" id="NX_Q9H607"/>
<dbReference type="OpenTargets" id="ENSG00000099330"/>
<dbReference type="PharmGKB" id="PA162398385"/>
<dbReference type="VEuPathDB" id="HostDB:ENSG00000099330"/>
<dbReference type="eggNOG" id="KOG4796">
    <property type="taxonomic scope" value="Eukaryota"/>
</dbReference>
<dbReference type="GeneTree" id="ENSGT00940000162475"/>
<dbReference type="InParanoid" id="Q9H607"/>
<dbReference type="OMA" id="ARCLYLK"/>
<dbReference type="OrthoDB" id="9445081at2759"/>
<dbReference type="PAN-GO" id="Q9H607">
    <property type="GO annotations" value="4 GO annotations based on evolutionary models"/>
</dbReference>
<dbReference type="PhylomeDB" id="Q9H607"/>
<dbReference type="TreeFam" id="TF337682"/>
<dbReference type="PathwayCommons" id="Q9H607"/>
<dbReference type="SignaLink" id="Q9H607"/>
<dbReference type="BioGRID-ORCS" id="79629">
    <property type="hits" value="9 hits in 1150 CRISPR screens"/>
</dbReference>
<dbReference type="ChiTaRS" id="OCEL1">
    <property type="organism name" value="human"/>
</dbReference>
<dbReference type="GenomeRNAi" id="79629"/>
<dbReference type="Pharos" id="Q9H607">
    <property type="development level" value="Tdark"/>
</dbReference>
<dbReference type="PRO" id="PR:Q9H607"/>
<dbReference type="Proteomes" id="UP000005640">
    <property type="component" value="Chromosome 19"/>
</dbReference>
<dbReference type="RNAct" id="Q9H607">
    <property type="molecule type" value="protein"/>
</dbReference>
<dbReference type="Bgee" id="ENSG00000099330">
    <property type="expression patterns" value="Expressed in right uterine tube and 162 other cell types or tissues"/>
</dbReference>
<dbReference type="ExpressionAtlas" id="Q9H607">
    <property type="expression patterns" value="baseline and differential"/>
</dbReference>
<dbReference type="GO" id="GO:0016324">
    <property type="term" value="C:apical plasma membrane"/>
    <property type="evidence" value="ECO:0000318"/>
    <property type="project" value="GO_Central"/>
</dbReference>
<dbReference type="GO" id="GO:0005923">
    <property type="term" value="C:bicellular tight junction"/>
    <property type="evidence" value="ECO:0000318"/>
    <property type="project" value="GO_Central"/>
</dbReference>
<dbReference type="GO" id="GO:0031410">
    <property type="term" value="C:cytoplasmic vesicle"/>
    <property type="evidence" value="ECO:0000318"/>
    <property type="project" value="GO_Central"/>
</dbReference>
<dbReference type="GO" id="GO:0070830">
    <property type="term" value="P:bicellular tight junction assembly"/>
    <property type="evidence" value="ECO:0000318"/>
    <property type="project" value="GO_Central"/>
</dbReference>
<dbReference type="Gene3D" id="6.10.140.340">
    <property type="match status" value="1"/>
</dbReference>
<dbReference type="InterPro" id="IPR031176">
    <property type="entry name" value="ELL/occludin"/>
</dbReference>
<dbReference type="InterPro" id="IPR010844">
    <property type="entry name" value="Occludin_ELL"/>
</dbReference>
<dbReference type="PANTHER" id="PTHR23288">
    <property type="entry name" value="OCCLUDIN AND RNA POLYMERASE II ELONGATION FACTOR ELL"/>
    <property type="match status" value="1"/>
</dbReference>
<dbReference type="PANTHER" id="PTHR23288:SF15">
    <property type="entry name" value="OCCLUDIN_ELL DOMAIN-CONTAINING PROTEIN 1"/>
    <property type="match status" value="1"/>
</dbReference>
<dbReference type="Pfam" id="PF07303">
    <property type="entry name" value="Occludin_ELL"/>
    <property type="match status" value="1"/>
</dbReference>
<dbReference type="SUPFAM" id="SSF144292">
    <property type="entry name" value="occludin/ELL-like"/>
    <property type="match status" value="1"/>
</dbReference>
<dbReference type="PROSITE" id="PS51980">
    <property type="entry name" value="OCEL"/>
    <property type="match status" value="1"/>
</dbReference>
<accession>Q9H607</accession>
<proteinExistence type="evidence at protein level"/>